<name>MGP_HUMAN</name>
<feature type="signal peptide">
    <location>
        <begin position="1"/>
        <end position="19"/>
    </location>
</feature>
<feature type="chain" id="PRO_0000011109" description="Matrix Gla protein">
    <location>
        <begin position="20"/>
        <end position="96"/>
    </location>
</feature>
<feature type="propeptide" id="PRO_0000011110" description="Removed in mature form; probably by carboxypeptidase N">
    <location>
        <begin position="97"/>
        <end position="103"/>
    </location>
</feature>
<feature type="domain" description="Gla" evidence="2">
    <location>
        <begin position="51"/>
        <end position="97"/>
    </location>
</feature>
<feature type="modified residue" description="4-carboxyglutamate" evidence="1 2">
    <location>
        <position position="21"/>
    </location>
</feature>
<feature type="modified residue" description="Phosphoserine" evidence="7">
    <location>
        <position position="22"/>
    </location>
</feature>
<feature type="modified residue" description="Phosphoserine" evidence="7">
    <location>
        <position position="25"/>
    </location>
</feature>
<feature type="modified residue" description="Phosphoserine" evidence="7">
    <location>
        <position position="28"/>
    </location>
</feature>
<feature type="modified residue" description="4-carboxyglutamate" evidence="1 2">
    <location>
        <position position="56"/>
    </location>
</feature>
<feature type="modified residue" description="4-carboxyglutamate" evidence="1 2">
    <location>
        <position position="60"/>
    </location>
</feature>
<feature type="modified residue" description="4-carboxyglutamate" evidence="1 2">
    <location>
        <position position="67"/>
    </location>
</feature>
<feature type="modified residue" description="4-carboxyglutamate" evidence="1 2">
    <location>
        <position position="71"/>
    </location>
</feature>
<feature type="disulfide bond" evidence="2">
    <location>
        <begin position="73"/>
        <end position="79"/>
    </location>
</feature>
<feature type="splice variant" id="VSP_046999" description="In isoform 2." evidence="12">
    <original>Y</original>
    <variation>YGEWQKEENFGFDIVSVLSLNWHRAQ</variation>
    <location>
        <position position="20"/>
    </location>
</feature>
<feature type="sequence variant" id="VAR_016177" description="In dbSNP:rs1801716.">
    <original>K</original>
    <variation>E</variation>
    <location>
        <position position="53"/>
    </location>
</feature>
<feature type="sequence variant" id="VAR_016178" description="In dbSNP:rs4236." evidence="3 4 5 6 9 10 11">
    <original>T</original>
    <variation>A</variation>
    <location>
        <position position="102"/>
    </location>
</feature>
<feature type="sequence conflict" description="In Ref. 11; AAH93078." evidence="12" ref="11">
    <original>Y</original>
    <variation>C</variation>
    <location>
        <position position="20"/>
    </location>
</feature>
<feature type="sequence conflict" description="In Ref. 6; CAG29354." evidence="12" ref="6">
    <original>R</original>
    <variation>G</variation>
    <location>
        <position position="51"/>
    </location>
</feature>
<comment type="function">
    <text>Associates with the organic matrix of bone and cartilage. Thought to act as an inhibitor of bone formation.</text>
</comment>
<comment type="subcellular location">
    <subcellularLocation>
        <location>Secreted</location>
    </subcellularLocation>
</comment>
<comment type="alternative products">
    <event type="alternative splicing"/>
    <isoform>
        <id>P08493-1</id>
        <name>1</name>
        <sequence type="displayed"/>
    </isoform>
    <isoform>
        <id>P08493-2</id>
        <name>2</name>
        <sequence type="described" ref="VSP_046999"/>
    </isoform>
</comment>
<comment type="PTM">
    <text>Requires vitamin K-dependent gamma-carboxylation for its function.</text>
</comment>
<comment type="disease" evidence="8">
    <disease id="DI-01864">
        <name>Keutel syndrome</name>
        <acronym>KTLS</acronym>
        <description>An autosomal recessive disorder characterized by abnormal cartilage calcification, peripheral pulmonary stenosis neural hearing loss and midfacial hypoplasia.</description>
        <dbReference type="MIM" id="245150"/>
    </disease>
    <text>The disease is caused by variants affecting the gene represented in this entry.</text>
</comment>
<comment type="similarity">
    <text evidence="12">Belongs to the osteocalcin/matrix Gla protein family.</text>
</comment>
<accession>P08493</accession>
<accession>A0M8W5</accession>
<accession>B2R519</accession>
<accession>J3KMX7</accession>
<accession>Q2TU41</accession>
<accession>Q567P9</accession>
<accession>Q6ICN5</accession>
<dbReference type="EMBL" id="M58549">
    <property type="protein sequence ID" value="AAB53766.1"/>
    <property type="molecule type" value="mRNA"/>
</dbReference>
<dbReference type="EMBL" id="M55270">
    <property type="protein sequence ID" value="AAB53765.1"/>
    <property type="molecule type" value="Genomic_DNA"/>
</dbReference>
<dbReference type="EMBL" id="X07362">
    <property type="protein sequence ID" value="CAA30287.1"/>
    <property type="molecule type" value="mRNA"/>
</dbReference>
<dbReference type="EMBL" id="X53331">
    <property type="protein sequence ID" value="CAA37418.1"/>
    <property type="molecule type" value="mRNA"/>
</dbReference>
<dbReference type="EMBL" id="AY542304">
    <property type="protein sequence ID" value="AAT08173.1"/>
    <property type="molecule type" value="mRNA"/>
</dbReference>
<dbReference type="EMBL" id="BT006733">
    <property type="protein sequence ID" value="AAP35379.1"/>
    <property type="molecule type" value="mRNA"/>
</dbReference>
<dbReference type="EMBL" id="CR450358">
    <property type="protein sequence ID" value="CAG29354.1"/>
    <property type="molecule type" value="mRNA"/>
</dbReference>
<dbReference type="EMBL" id="AK312029">
    <property type="protein sequence ID" value="BAG34966.1"/>
    <property type="molecule type" value="mRNA"/>
</dbReference>
<dbReference type="EMBL" id="DQ004248">
    <property type="protein sequence ID" value="AAY16978.1"/>
    <property type="molecule type" value="Genomic_DNA"/>
</dbReference>
<dbReference type="EMBL" id="AC007655">
    <property type="status" value="NOT_ANNOTATED_CDS"/>
    <property type="molecule type" value="Genomic_DNA"/>
</dbReference>
<dbReference type="EMBL" id="CH471094">
    <property type="protein sequence ID" value="EAW96333.1"/>
    <property type="molecule type" value="Genomic_DNA"/>
</dbReference>
<dbReference type="EMBL" id="BC005272">
    <property type="protein sequence ID" value="AAH05272.1"/>
    <property type="molecule type" value="mRNA"/>
</dbReference>
<dbReference type="EMBL" id="BC070314">
    <property type="protein sequence ID" value="AAH70314.1"/>
    <property type="molecule type" value="mRNA"/>
</dbReference>
<dbReference type="EMBL" id="BC093078">
    <property type="protein sequence ID" value="AAH93078.1"/>
    <property type="molecule type" value="mRNA"/>
</dbReference>
<dbReference type="CCDS" id="CCDS53752.1">
    <molecule id="P08493-2"/>
</dbReference>
<dbReference type="CCDS" id="CCDS8669.1">
    <molecule id="P08493-1"/>
</dbReference>
<dbReference type="PIR" id="A35811">
    <property type="entry name" value="GEHUM"/>
</dbReference>
<dbReference type="RefSeq" id="NP_000891.2">
    <molecule id="P08493-1"/>
    <property type="nucleotide sequence ID" value="NM_000900.4"/>
</dbReference>
<dbReference type="RefSeq" id="NP_001177768.1">
    <molecule id="P08493-2"/>
    <property type="nucleotide sequence ID" value="NM_001190839.3"/>
</dbReference>
<dbReference type="SMR" id="P08493"/>
<dbReference type="BioGRID" id="110412">
    <property type="interactions" value="6"/>
</dbReference>
<dbReference type="FunCoup" id="P08493">
    <property type="interactions" value="70"/>
</dbReference>
<dbReference type="IntAct" id="P08493">
    <property type="interactions" value="4"/>
</dbReference>
<dbReference type="MINT" id="P08493"/>
<dbReference type="STRING" id="9606.ENSP00000228938"/>
<dbReference type="DrugBank" id="DB01373">
    <property type="generic name" value="Calcium"/>
</dbReference>
<dbReference type="iPTMnet" id="P08493"/>
<dbReference type="PhosphoSitePlus" id="P08493"/>
<dbReference type="BioMuta" id="MGP"/>
<dbReference type="DMDM" id="118572668"/>
<dbReference type="CPTAC" id="non-CPTAC-1141"/>
<dbReference type="jPOST" id="P08493"/>
<dbReference type="MassIVE" id="P08493"/>
<dbReference type="PeptideAtlas" id="P08493"/>
<dbReference type="ProteomicsDB" id="52112">
    <molecule id="P08493-1"/>
</dbReference>
<dbReference type="Antibodypedia" id="2842">
    <property type="antibodies" value="310 antibodies from 30 providers"/>
</dbReference>
<dbReference type="DNASU" id="4256"/>
<dbReference type="Ensembl" id="ENST00000228938.5">
    <molecule id="P08493-2"/>
    <property type="protein sequence ID" value="ENSP00000228938.5"/>
    <property type="gene ID" value="ENSG00000111341.10"/>
</dbReference>
<dbReference type="Ensembl" id="ENST00000539261.6">
    <molecule id="P08493-1"/>
    <property type="protein sequence ID" value="ENSP00000445907.1"/>
    <property type="gene ID" value="ENSG00000111341.10"/>
</dbReference>
<dbReference type="GeneID" id="4256"/>
<dbReference type="KEGG" id="hsa:4256"/>
<dbReference type="MANE-Select" id="ENST00000539261.6">
    <property type="protein sequence ID" value="ENSP00000445907.1"/>
    <property type="RefSeq nucleotide sequence ID" value="NM_000900.5"/>
    <property type="RefSeq protein sequence ID" value="NP_000891.2"/>
</dbReference>
<dbReference type="UCSC" id="uc001rcn.3">
    <molecule id="P08493-1"/>
    <property type="organism name" value="human"/>
</dbReference>
<dbReference type="AGR" id="HGNC:7060"/>
<dbReference type="CTD" id="4256"/>
<dbReference type="DisGeNET" id="4256"/>
<dbReference type="GeneCards" id="MGP"/>
<dbReference type="HGNC" id="HGNC:7060">
    <property type="gene designation" value="MGP"/>
</dbReference>
<dbReference type="HPA" id="ENSG00000111341">
    <property type="expression patterns" value="Low tissue specificity"/>
</dbReference>
<dbReference type="MalaCards" id="MGP"/>
<dbReference type="MIM" id="154870">
    <property type="type" value="gene"/>
</dbReference>
<dbReference type="MIM" id="245150">
    <property type="type" value="phenotype"/>
</dbReference>
<dbReference type="neXtProt" id="NX_P08493"/>
<dbReference type="OpenTargets" id="ENSG00000111341"/>
<dbReference type="Orphanet" id="85202">
    <property type="disease" value="Keutel syndrome"/>
</dbReference>
<dbReference type="PharmGKB" id="PA30790"/>
<dbReference type="VEuPathDB" id="HostDB:ENSG00000111341"/>
<dbReference type="GeneTree" id="ENSGT00390000003753"/>
<dbReference type="HOGENOM" id="CLU_177119_1_0_1"/>
<dbReference type="InParanoid" id="P08493"/>
<dbReference type="OMA" id="TAFCYES"/>
<dbReference type="OrthoDB" id="8958520at2759"/>
<dbReference type="PAN-GO" id="P08493">
    <property type="GO annotations" value="1 GO annotation based on evolutionary models"/>
</dbReference>
<dbReference type="PhylomeDB" id="P08493"/>
<dbReference type="TreeFam" id="TF330920"/>
<dbReference type="PathwayCommons" id="P08493"/>
<dbReference type="SignaLink" id="P08493"/>
<dbReference type="BioGRID-ORCS" id="4256">
    <property type="hits" value="13 hits in 1151 CRISPR screens"/>
</dbReference>
<dbReference type="ChiTaRS" id="MGP">
    <property type="organism name" value="human"/>
</dbReference>
<dbReference type="GeneWiki" id="Matrix_gla_protein"/>
<dbReference type="GenomeRNAi" id="4256"/>
<dbReference type="Pharos" id="P08493">
    <property type="development level" value="Tbio"/>
</dbReference>
<dbReference type="PRO" id="PR:P08493"/>
<dbReference type="Proteomes" id="UP000005640">
    <property type="component" value="Chromosome 12"/>
</dbReference>
<dbReference type="RNAct" id="P08493">
    <property type="molecule type" value="protein"/>
</dbReference>
<dbReference type="Bgee" id="ENSG00000111341">
    <property type="expression patterns" value="Expressed in descending thoracic aorta and 189 other cell types or tissues"/>
</dbReference>
<dbReference type="ExpressionAtlas" id="P08493">
    <property type="expression patterns" value="baseline and differential"/>
</dbReference>
<dbReference type="GO" id="GO:0062023">
    <property type="term" value="C:collagen-containing extracellular matrix"/>
    <property type="evidence" value="ECO:0007005"/>
    <property type="project" value="BHF-UCL"/>
</dbReference>
<dbReference type="GO" id="GO:0070062">
    <property type="term" value="C:extracellular exosome"/>
    <property type="evidence" value="ECO:0007005"/>
    <property type="project" value="UniProtKB"/>
</dbReference>
<dbReference type="GO" id="GO:0031012">
    <property type="term" value="C:extracellular matrix"/>
    <property type="evidence" value="ECO:0000318"/>
    <property type="project" value="GO_Central"/>
</dbReference>
<dbReference type="GO" id="GO:0005509">
    <property type="term" value="F:calcium ion binding"/>
    <property type="evidence" value="ECO:0007669"/>
    <property type="project" value="InterPro"/>
</dbReference>
<dbReference type="GO" id="GO:0005201">
    <property type="term" value="F:extracellular matrix structural constituent"/>
    <property type="evidence" value="ECO:0000304"/>
    <property type="project" value="ProtInc"/>
</dbReference>
<dbReference type="GO" id="GO:0008147">
    <property type="term" value="F:structural constituent of bone"/>
    <property type="evidence" value="ECO:0000304"/>
    <property type="project" value="ProtInc"/>
</dbReference>
<dbReference type="GO" id="GO:0001502">
    <property type="term" value="P:cartilage condensation"/>
    <property type="evidence" value="ECO:0000304"/>
    <property type="project" value="ProtInc"/>
</dbReference>
<dbReference type="GO" id="GO:0030154">
    <property type="term" value="P:cell differentiation"/>
    <property type="evidence" value="ECO:0007669"/>
    <property type="project" value="UniProtKB-KW"/>
</dbReference>
<dbReference type="GO" id="GO:0001503">
    <property type="term" value="P:ossification"/>
    <property type="evidence" value="ECO:0000304"/>
    <property type="project" value="ProtInc"/>
</dbReference>
<dbReference type="GO" id="GO:0030500">
    <property type="term" value="P:regulation of bone mineralization"/>
    <property type="evidence" value="ECO:0007669"/>
    <property type="project" value="InterPro"/>
</dbReference>
<dbReference type="InterPro" id="IPR035972">
    <property type="entry name" value="GLA-like_dom_SF"/>
</dbReference>
<dbReference type="InterPro" id="IPR000294">
    <property type="entry name" value="GLA_domain"/>
</dbReference>
<dbReference type="InterPro" id="IPR027118">
    <property type="entry name" value="MGP"/>
</dbReference>
<dbReference type="InterPro" id="IPR002384">
    <property type="entry name" value="Osteocalcin/MGP"/>
</dbReference>
<dbReference type="PANTHER" id="PTHR10109">
    <property type="entry name" value="MATRIX GLA PROTEIN"/>
    <property type="match status" value="1"/>
</dbReference>
<dbReference type="PANTHER" id="PTHR10109:SF0">
    <property type="entry name" value="MATRIX GLA PROTEIN"/>
    <property type="match status" value="1"/>
</dbReference>
<dbReference type="PRINTS" id="PR00002">
    <property type="entry name" value="GLABONE"/>
</dbReference>
<dbReference type="SMART" id="SM00069">
    <property type="entry name" value="GLA"/>
    <property type="match status" value="1"/>
</dbReference>
<dbReference type="SUPFAM" id="SSF57630">
    <property type="entry name" value="GLA-domain"/>
    <property type="match status" value="1"/>
</dbReference>
<dbReference type="PROSITE" id="PS00011">
    <property type="entry name" value="GLA_1"/>
    <property type="match status" value="1"/>
</dbReference>
<dbReference type="PROSITE" id="PS50998">
    <property type="entry name" value="GLA_2"/>
    <property type="match status" value="1"/>
</dbReference>
<keyword id="KW-0025">Alternative splicing</keyword>
<keyword id="KW-0891">Chondrogenesis</keyword>
<keyword id="KW-0209">Deafness</keyword>
<keyword id="KW-0217">Developmental protein</keyword>
<keyword id="KW-0221">Differentiation</keyword>
<keyword id="KW-0903">Direct protein sequencing</keyword>
<keyword id="KW-1015">Disulfide bond</keyword>
<keyword id="KW-0301">Gamma-carboxyglutamic acid</keyword>
<keyword id="KW-0892">Osteogenesis</keyword>
<keyword id="KW-0597">Phosphoprotein</keyword>
<keyword id="KW-1267">Proteomics identification</keyword>
<keyword id="KW-1185">Reference proteome</keyword>
<keyword id="KW-0964">Secreted</keyword>
<keyword id="KW-0732">Signal</keyword>
<evidence type="ECO:0000250" key="1">
    <source>
        <dbReference type="UniProtKB" id="P07507"/>
    </source>
</evidence>
<evidence type="ECO:0000255" key="2">
    <source>
        <dbReference type="PROSITE-ProRule" id="PRU00463"/>
    </source>
</evidence>
<evidence type="ECO:0000269" key="3">
    <source>
    </source>
</evidence>
<evidence type="ECO:0000269" key="4">
    <source>
    </source>
</evidence>
<evidence type="ECO:0000269" key="5">
    <source>
    </source>
</evidence>
<evidence type="ECO:0000269" key="6">
    <source>
    </source>
</evidence>
<evidence type="ECO:0000269" key="7">
    <source>
    </source>
</evidence>
<evidence type="ECO:0000269" key="8">
    <source>
    </source>
</evidence>
<evidence type="ECO:0000269" key="9">
    <source ref="5"/>
</evidence>
<evidence type="ECO:0000269" key="10">
    <source ref="6"/>
</evidence>
<evidence type="ECO:0000269" key="11">
    <source ref="8"/>
</evidence>
<evidence type="ECO:0000305" key="12"/>
<gene>
    <name type="primary">MGP</name>
    <name type="synonym">MGLAP</name>
    <name type="ORF">GIG36</name>
</gene>
<reference key="1">
    <citation type="journal article" date="1990" name="J. Biol. Chem.">
        <title>Molecular structure, chromosome assignment, and promoter organization of the human matrix Gla protein gene.</title>
        <authorList>
            <person name="Cancela M.L."/>
            <person name="Hsieh C.-L."/>
            <person name="Francke U."/>
            <person name="Price P.A."/>
        </authorList>
    </citation>
    <scope>NUCLEOTIDE SEQUENCE [GENOMIC DNA / MRNA] (ISOFORM 1)</scope>
</reference>
<reference key="2">
    <citation type="journal article" date="1988" name="Nucleic Acids Res.">
        <title>The cDNA and derived amino acid sequences for human and bovine matrix Gla protein.</title>
        <authorList>
            <person name="Kiefer M.C."/>
            <person name="Bauer D.M."/>
            <person name="Young D."/>
            <person name="Hermsen K.M."/>
            <person name="Masiarz F.K."/>
            <person name="Barr P.J."/>
        </authorList>
    </citation>
    <scope>NUCLEOTIDE SEQUENCE [MRNA] (ISOFORM 1)</scope>
    <scope>VARIANT ALA-102</scope>
</reference>
<reference key="3">
    <citation type="journal article" date="1990" name="Oncogene">
        <title>Overexpression of matrix Gla protein mRNA in malignant human breast cells: isolation by differential cDNA hybridization.</title>
        <authorList>
            <person name="Chen L."/>
            <person name="O'Bryan J.P."/>
            <person name="Smith H.S."/>
            <person name="Liu E."/>
        </authorList>
    </citation>
    <scope>NUCLEOTIDE SEQUENCE [MRNA] (ISOFORM 1)</scope>
    <scope>VARIANT ALA-102</scope>
</reference>
<reference key="4">
    <citation type="submission" date="2004-02" db="EMBL/GenBank/DDBJ databases">
        <title>Identification of a human cell growth inhibition gene.</title>
        <authorList>
            <person name="Kim J.W."/>
        </authorList>
    </citation>
    <scope>NUCLEOTIDE SEQUENCE [LARGE SCALE MRNA] (ISOFORM 1)</scope>
</reference>
<reference key="5">
    <citation type="submission" date="2003-05" db="EMBL/GenBank/DDBJ databases">
        <title>Cloning of human full-length CDSs in BD Creator(TM) system donor vector.</title>
        <authorList>
            <person name="Kalnine N."/>
            <person name="Chen X."/>
            <person name="Rolfs A."/>
            <person name="Halleck A."/>
            <person name="Hines L."/>
            <person name="Eisenstein S."/>
            <person name="Koundinya M."/>
            <person name="Raphael J."/>
            <person name="Moreira D."/>
            <person name="Kelley T."/>
            <person name="LaBaer J."/>
            <person name="Lin Y."/>
            <person name="Phelan M."/>
            <person name="Farmer A."/>
        </authorList>
    </citation>
    <scope>NUCLEOTIDE SEQUENCE [LARGE SCALE MRNA] (ISOFORM 1)</scope>
    <scope>VARIANT ALA-102</scope>
</reference>
<reference key="6">
    <citation type="submission" date="2004-05" db="EMBL/GenBank/DDBJ databases">
        <title>Cloning of human full open reading frames in Gateway(TM) system entry vector (pDONR201).</title>
        <authorList>
            <person name="Ebert L."/>
            <person name="Schick M."/>
            <person name="Neubert P."/>
            <person name="Schatten R."/>
            <person name="Henze S."/>
            <person name="Korn B."/>
        </authorList>
    </citation>
    <scope>NUCLEOTIDE SEQUENCE [LARGE SCALE MRNA] (ISOFORM 1)</scope>
    <scope>VARIANT ALA-102</scope>
</reference>
<reference key="7">
    <citation type="journal article" date="2004" name="Nat. Genet.">
        <title>Complete sequencing and characterization of 21,243 full-length human cDNAs.</title>
        <authorList>
            <person name="Ota T."/>
            <person name="Suzuki Y."/>
            <person name="Nishikawa T."/>
            <person name="Otsuki T."/>
            <person name="Sugiyama T."/>
            <person name="Irie R."/>
            <person name="Wakamatsu A."/>
            <person name="Hayashi K."/>
            <person name="Sato H."/>
            <person name="Nagai K."/>
            <person name="Kimura K."/>
            <person name="Makita H."/>
            <person name="Sekine M."/>
            <person name="Obayashi M."/>
            <person name="Nishi T."/>
            <person name="Shibahara T."/>
            <person name="Tanaka T."/>
            <person name="Ishii S."/>
            <person name="Yamamoto J."/>
            <person name="Saito K."/>
            <person name="Kawai Y."/>
            <person name="Isono Y."/>
            <person name="Nakamura Y."/>
            <person name="Nagahari K."/>
            <person name="Murakami K."/>
            <person name="Yasuda T."/>
            <person name="Iwayanagi T."/>
            <person name="Wagatsuma M."/>
            <person name="Shiratori A."/>
            <person name="Sudo H."/>
            <person name="Hosoiri T."/>
            <person name="Kaku Y."/>
            <person name="Kodaira H."/>
            <person name="Kondo H."/>
            <person name="Sugawara M."/>
            <person name="Takahashi M."/>
            <person name="Kanda K."/>
            <person name="Yokoi T."/>
            <person name="Furuya T."/>
            <person name="Kikkawa E."/>
            <person name="Omura Y."/>
            <person name="Abe K."/>
            <person name="Kamihara K."/>
            <person name="Katsuta N."/>
            <person name="Sato K."/>
            <person name="Tanikawa M."/>
            <person name="Yamazaki M."/>
            <person name="Ninomiya K."/>
            <person name="Ishibashi T."/>
            <person name="Yamashita H."/>
            <person name="Murakawa K."/>
            <person name="Fujimori K."/>
            <person name="Tanai H."/>
            <person name="Kimata M."/>
            <person name="Watanabe M."/>
            <person name="Hiraoka S."/>
            <person name="Chiba Y."/>
            <person name="Ishida S."/>
            <person name="Ono Y."/>
            <person name="Takiguchi S."/>
            <person name="Watanabe S."/>
            <person name="Yosida M."/>
            <person name="Hotuta T."/>
            <person name="Kusano J."/>
            <person name="Kanehori K."/>
            <person name="Takahashi-Fujii A."/>
            <person name="Hara H."/>
            <person name="Tanase T.-O."/>
            <person name="Nomura Y."/>
            <person name="Togiya S."/>
            <person name="Komai F."/>
            <person name="Hara R."/>
            <person name="Takeuchi K."/>
            <person name="Arita M."/>
            <person name="Imose N."/>
            <person name="Musashino K."/>
            <person name="Yuuki H."/>
            <person name="Oshima A."/>
            <person name="Sasaki N."/>
            <person name="Aotsuka S."/>
            <person name="Yoshikawa Y."/>
            <person name="Matsunawa H."/>
            <person name="Ichihara T."/>
            <person name="Shiohata N."/>
            <person name="Sano S."/>
            <person name="Moriya S."/>
            <person name="Momiyama H."/>
            <person name="Satoh N."/>
            <person name="Takami S."/>
            <person name="Terashima Y."/>
            <person name="Suzuki O."/>
            <person name="Nakagawa S."/>
            <person name="Senoh A."/>
            <person name="Mizoguchi H."/>
            <person name="Goto Y."/>
            <person name="Shimizu F."/>
            <person name="Wakebe H."/>
            <person name="Hishigaki H."/>
            <person name="Watanabe T."/>
            <person name="Sugiyama A."/>
            <person name="Takemoto M."/>
            <person name="Kawakami B."/>
            <person name="Yamazaki M."/>
            <person name="Watanabe K."/>
            <person name="Kumagai A."/>
            <person name="Itakura S."/>
            <person name="Fukuzumi Y."/>
            <person name="Fujimori Y."/>
            <person name="Komiyama M."/>
            <person name="Tashiro H."/>
            <person name="Tanigami A."/>
            <person name="Fujiwara T."/>
            <person name="Ono T."/>
            <person name="Yamada K."/>
            <person name="Fujii Y."/>
            <person name="Ozaki K."/>
            <person name="Hirao M."/>
            <person name="Ohmori Y."/>
            <person name="Kawabata A."/>
            <person name="Hikiji T."/>
            <person name="Kobatake N."/>
            <person name="Inagaki H."/>
            <person name="Ikema Y."/>
            <person name="Okamoto S."/>
            <person name="Okitani R."/>
            <person name="Kawakami T."/>
            <person name="Noguchi S."/>
            <person name="Itoh T."/>
            <person name="Shigeta K."/>
            <person name="Senba T."/>
            <person name="Matsumura K."/>
            <person name="Nakajima Y."/>
            <person name="Mizuno T."/>
            <person name="Morinaga M."/>
            <person name="Sasaki M."/>
            <person name="Togashi T."/>
            <person name="Oyama M."/>
            <person name="Hata H."/>
            <person name="Watanabe M."/>
            <person name="Komatsu T."/>
            <person name="Mizushima-Sugano J."/>
            <person name="Satoh T."/>
            <person name="Shirai Y."/>
            <person name="Takahashi Y."/>
            <person name="Nakagawa K."/>
            <person name="Okumura K."/>
            <person name="Nagase T."/>
            <person name="Nomura N."/>
            <person name="Kikuchi H."/>
            <person name="Masuho Y."/>
            <person name="Yamashita R."/>
            <person name="Nakai K."/>
            <person name="Yada T."/>
            <person name="Nakamura Y."/>
            <person name="Ohara O."/>
            <person name="Isogai T."/>
            <person name="Sugano S."/>
        </authorList>
    </citation>
    <scope>NUCLEOTIDE SEQUENCE [LARGE SCALE MRNA] (ISOFORM 1)</scope>
    <scope>VARIANT ALA-102</scope>
    <source>
        <tissue>Cervix</tissue>
    </source>
</reference>
<reference key="8">
    <citation type="submission" date="2005-04" db="EMBL/GenBank/DDBJ databases">
        <authorList>
            <consortium name="SeattleSNPs variation discovery resource"/>
        </authorList>
    </citation>
    <scope>NUCLEOTIDE SEQUENCE [GENOMIC DNA]</scope>
    <scope>VARIANT ALA-102</scope>
</reference>
<reference key="9">
    <citation type="journal article" date="2006" name="Nature">
        <title>The finished DNA sequence of human chromosome 12.</title>
        <authorList>
            <person name="Scherer S.E."/>
            <person name="Muzny D.M."/>
            <person name="Buhay C.J."/>
            <person name="Chen R."/>
            <person name="Cree A."/>
            <person name="Ding Y."/>
            <person name="Dugan-Rocha S."/>
            <person name="Gill R."/>
            <person name="Gunaratne P."/>
            <person name="Harris R.A."/>
            <person name="Hawes A.C."/>
            <person name="Hernandez J."/>
            <person name="Hodgson A.V."/>
            <person name="Hume J."/>
            <person name="Jackson A."/>
            <person name="Khan Z.M."/>
            <person name="Kovar-Smith C."/>
            <person name="Lewis L.R."/>
            <person name="Lozado R.J."/>
            <person name="Metzker M.L."/>
            <person name="Milosavljevic A."/>
            <person name="Miner G.R."/>
            <person name="Montgomery K.T."/>
            <person name="Morgan M.B."/>
            <person name="Nazareth L.V."/>
            <person name="Scott G."/>
            <person name="Sodergren E."/>
            <person name="Song X.-Z."/>
            <person name="Steffen D."/>
            <person name="Lovering R.C."/>
            <person name="Wheeler D.A."/>
            <person name="Worley K.C."/>
            <person name="Yuan Y."/>
            <person name="Zhang Z."/>
            <person name="Adams C.Q."/>
            <person name="Ansari-Lari M.A."/>
            <person name="Ayele M."/>
            <person name="Brown M.J."/>
            <person name="Chen G."/>
            <person name="Chen Z."/>
            <person name="Clerc-Blankenburg K.P."/>
            <person name="Davis C."/>
            <person name="Delgado O."/>
            <person name="Dinh H.H."/>
            <person name="Draper H."/>
            <person name="Gonzalez-Garay M.L."/>
            <person name="Havlak P."/>
            <person name="Jackson L.R."/>
            <person name="Jacob L.S."/>
            <person name="Kelly S.H."/>
            <person name="Li L."/>
            <person name="Li Z."/>
            <person name="Liu J."/>
            <person name="Liu W."/>
            <person name="Lu J."/>
            <person name="Maheshwari M."/>
            <person name="Nguyen B.-V."/>
            <person name="Okwuonu G.O."/>
            <person name="Pasternak S."/>
            <person name="Perez L.M."/>
            <person name="Plopper F.J.H."/>
            <person name="Santibanez J."/>
            <person name="Shen H."/>
            <person name="Tabor P.E."/>
            <person name="Verduzco D."/>
            <person name="Waldron L."/>
            <person name="Wang Q."/>
            <person name="Williams G.A."/>
            <person name="Zhang J."/>
            <person name="Zhou J."/>
            <person name="Allen C.C."/>
            <person name="Amin A.G."/>
            <person name="Anyalebechi V."/>
            <person name="Bailey M."/>
            <person name="Barbaria J.A."/>
            <person name="Bimage K.E."/>
            <person name="Bryant N.P."/>
            <person name="Burch P.E."/>
            <person name="Burkett C.E."/>
            <person name="Burrell K.L."/>
            <person name="Calderon E."/>
            <person name="Cardenas V."/>
            <person name="Carter K."/>
            <person name="Casias K."/>
            <person name="Cavazos I."/>
            <person name="Cavazos S.R."/>
            <person name="Ceasar H."/>
            <person name="Chacko J."/>
            <person name="Chan S.N."/>
            <person name="Chavez D."/>
            <person name="Christopoulos C."/>
            <person name="Chu J."/>
            <person name="Cockrell R."/>
            <person name="Cox C.D."/>
            <person name="Dang M."/>
            <person name="Dathorne S.R."/>
            <person name="David R."/>
            <person name="Davis C.M."/>
            <person name="Davy-Carroll L."/>
            <person name="Deshazo D.R."/>
            <person name="Donlin J.E."/>
            <person name="D'Souza L."/>
            <person name="Eaves K.A."/>
            <person name="Egan A."/>
            <person name="Emery-Cohen A.J."/>
            <person name="Escotto M."/>
            <person name="Flagg N."/>
            <person name="Forbes L.D."/>
            <person name="Gabisi A.M."/>
            <person name="Garza M."/>
            <person name="Hamilton C."/>
            <person name="Henderson N."/>
            <person name="Hernandez O."/>
            <person name="Hines S."/>
            <person name="Hogues M.E."/>
            <person name="Huang M."/>
            <person name="Idlebird D.G."/>
            <person name="Johnson R."/>
            <person name="Jolivet A."/>
            <person name="Jones S."/>
            <person name="Kagan R."/>
            <person name="King L.M."/>
            <person name="Leal B."/>
            <person name="Lebow H."/>
            <person name="Lee S."/>
            <person name="LeVan J.M."/>
            <person name="Lewis L.C."/>
            <person name="London P."/>
            <person name="Lorensuhewa L.M."/>
            <person name="Loulseged H."/>
            <person name="Lovett D.A."/>
            <person name="Lucier A."/>
            <person name="Lucier R.L."/>
            <person name="Ma J."/>
            <person name="Madu R.C."/>
            <person name="Mapua P."/>
            <person name="Martindale A.D."/>
            <person name="Martinez E."/>
            <person name="Massey E."/>
            <person name="Mawhiney S."/>
            <person name="Meador M.G."/>
            <person name="Mendez S."/>
            <person name="Mercado C."/>
            <person name="Mercado I.C."/>
            <person name="Merritt C.E."/>
            <person name="Miner Z.L."/>
            <person name="Minja E."/>
            <person name="Mitchell T."/>
            <person name="Mohabbat F."/>
            <person name="Mohabbat K."/>
            <person name="Montgomery B."/>
            <person name="Moore N."/>
            <person name="Morris S."/>
            <person name="Munidasa M."/>
            <person name="Ngo R.N."/>
            <person name="Nguyen N.B."/>
            <person name="Nickerson E."/>
            <person name="Nwaokelemeh O.O."/>
            <person name="Nwokenkwo S."/>
            <person name="Obregon M."/>
            <person name="Oguh M."/>
            <person name="Oragunye N."/>
            <person name="Oviedo R.J."/>
            <person name="Parish B.J."/>
            <person name="Parker D.N."/>
            <person name="Parrish J."/>
            <person name="Parks K.L."/>
            <person name="Paul H.A."/>
            <person name="Payton B.A."/>
            <person name="Perez A."/>
            <person name="Perrin W."/>
            <person name="Pickens A."/>
            <person name="Primus E.L."/>
            <person name="Pu L.-L."/>
            <person name="Puazo M."/>
            <person name="Quiles M.M."/>
            <person name="Quiroz J.B."/>
            <person name="Rabata D."/>
            <person name="Reeves K."/>
            <person name="Ruiz S.J."/>
            <person name="Shao H."/>
            <person name="Sisson I."/>
            <person name="Sonaike T."/>
            <person name="Sorelle R.P."/>
            <person name="Sutton A.E."/>
            <person name="Svatek A.F."/>
            <person name="Svetz L.A."/>
            <person name="Tamerisa K.S."/>
            <person name="Taylor T.R."/>
            <person name="Teague B."/>
            <person name="Thomas N."/>
            <person name="Thorn R.D."/>
            <person name="Trejos Z.Y."/>
            <person name="Trevino B.K."/>
            <person name="Ukegbu O.N."/>
            <person name="Urban J.B."/>
            <person name="Vasquez L.I."/>
            <person name="Vera V.A."/>
            <person name="Villasana D.M."/>
            <person name="Wang L."/>
            <person name="Ward-Moore S."/>
            <person name="Warren J.T."/>
            <person name="Wei X."/>
            <person name="White F."/>
            <person name="Williamson A.L."/>
            <person name="Wleczyk R."/>
            <person name="Wooden H.S."/>
            <person name="Wooden S.H."/>
            <person name="Yen J."/>
            <person name="Yoon L."/>
            <person name="Yoon V."/>
            <person name="Zorrilla S.E."/>
            <person name="Nelson D."/>
            <person name="Kucherlapati R."/>
            <person name="Weinstock G."/>
            <person name="Gibbs R.A."/>
        </authorList>
    </citation>
    <scope>NUCLEOTIDE SEQUENCE [LARGE SCALE GENOMIC DNA]</scope>
</reference>
<reference key="10">
    <citation type="submission" date="2005-07" db="EMBL/GenBank/DDBJ databases">
        <authorList>
            <person name="Mural R.J."/>
            <person name="Istrail S."/>
            <person name="Sutton G.G."/>
            <person name="Florea L."/>
            <person name="Halpern A.L."/>
            <person name="Mobarry C.M."/>
            <person name="Lippert R."/>
            <person name="Walenz B."/>
            <person name="Shatkay H."/>
            <person name="Dew I."/>
            <person name="Miller J.R."/>
            <person name="Flanigan M.J."/>
            <person name="Edwards N.J."/>
            <person name="Bolanos R."/>
            <person name="Fasulo D."/>
            <person name="Halldorsson B.V."/>
            <person name="Hannenhalli S."/>
            <person name="Turner R."/>
            <person name="Yooseph S."/>
            <person name="Lu F."/>
            <person name="Nusskern D.R."/>
            <person name="Shue B.C."/>
            <person name="Zheng X.H."/>
            <person name="Zhong F."/>
            <person name="Delcher A.L."/>
            <person name="Huson D.H."/>
            <person name="Kravitz S.A."/>
            <person name="Mouchard L."/>
            <person name="Reinert K."/>
            <person name="Remington K.A."/>
            <person name="Clark A.G."/>
            <person name="Waterman M.S."/>
            <person name="Eichler E.E."/>
            <person name="Adams M.D."/>
            <person name="Hunkapiller M.W."/>
            <person name="Myers E.W."/>
            <person name="Venter J.C."/>
        </authorList>
    </citation>
    <scope>NUCLEOTIDE SEQUENCE [LARGE SCALE GENOMIC DNA]</scope>
</reference>
<reference key="11">
    <citation type="journal article" date="2004" name="Genome Res.">
        <title>The status, quality, and expansion of the NIH full-length cDNA project: the Mammalian Gene Collection (MGC).</title>
        <authorList>
            <consortium name="The MGC Project Team"/>
        </authorList>
    </citation>
    <scope>NUCLEOTIDE SEQUENCE [LARGE SCALE MRNA] (ISOFORM 1)</scope>
    <scope>VARIANT ALA-102</scope>
    <source>
        <tissue>Brain</tissue>
    </source>
</reference>
<reference key="12">
    <citation type="journal article" date="1994" name="Protein Sci.">
        <title>Conserved phosphorylation of serines in the Ser-X-Glu/Ser(P) sequences of the vitamin K-dependent matrix Gla protein from shark, lamb, rat, cow, and human.</title>
        <authorList>
            <person name="Price P.A."/>
            <person name="Rice J.S."/>
            <person name="Williamson M.K."/>
        </authorList>
    </citation>
    <scope>PHOSPHORYLATION AT SER-22; SER-25 AND SER-28</scope>
</reference>
<reference key="13">
    <citation type="journal article" date="1991" name="J. Biol. Chem.">
        <title>Carboxyl-terminal proteolytic processing of matrix Gla protein.</title>
        <authorList>
            <person name="Hale J.E."/>
            <person name="Williamson M.K."/>
            <person name="Price P.A."/>
        </authorList>
    </citation>
    <scope>PARTIAL PROTEIN SEQUENCE</scope>
    <scope>PROTEOLYTIC PROCESSING OF C-TERMINAL</scope>
</reference>
<reference key="14">
    <citation type="journal article" date="1999" name="Nat. Genet.">
        <title>Mutations in the gene encoding the human matrix Gla protein cause Keutel syndrome.</title>
        <authorList>
            <person name="Munroe P.B."/>
            <person name="Olgunturk R.O."/>
            <person name="Fryns J.-P."/>
            <person name="Van Maldergem L."/>
            <person name="Ziereisen F."/>
            <person name="Yuksel B."/>
            <person name="Gardiner R.M."/>
            <person name="Chung E."/>
        </authorList>
    </citation>
    <scope>INVOLVEMENT IN KTLS</scope>
</reference>
<protein>
    <recommendedName>
        <fullName>Matrix Gla protein</fullName>
        <shortName>MGP</shortName>
    </recommendedName>
    <alternativeName>
        <fullName>Cell growth-inhibiting gene 36 protein</fullName>
    </alternativeName>
</protein>
<organism>
    <name type="scientific">Homo sapiens</name>
    <name type="common">Human</name>
    <dbReference type="NCBI Taxonomy" id="9606"/>
    <lineage>
        <taxon>Eukaryota</taxon>
        <taxon>Metazoa</taxon>
        <taxon>Chordata</taxon>
        <taxon>Craniata</taxon>
        <taxon>Vertebrata</taxon>
        <taxon>Euteleostomi</taxon>
        <taxon>Mammalia</taxon>
        <taxon>Eutheria</taxon>
        <taxon>Euarchontoglires</taxon>
        <taxon>Primates</taxon>
        <taxon>Haplorrhini</taxon>
        <taxon>Catarrhini</taxon>
        <taxon>Hominidae</taxon>
        <taxon>Homo</taxon>
    </lineage>
</organism>
<proteinExistence type="evidence at protein level"/>
<sequence>MKSLILLAILAALAVVTLCYESHESMESYELNPFINRRNANTFISPQQRWRAKVQERIRERSKPVHELNREACDDYRLCERYAMVYGYNAAYNRYFRKRRGTK</sequence>